<sequence>MMKLMLFSIIVILFSLIGSIHGADVPGNYPLDSSDDTYLCAPLGENPSCIQICRKHGVKYGYCYAFQCWCEYFGR</sequence>
<evidence type="ECO:0000250" key="1"/>
<evidence type="ECO:0000250" key="2">
    <source>
        <dbReference type="UniProtKB" id="P01493"/>
    </source>
</evidence>
<evidence type="ECO:0000255" key="3"/>
<evidence type="ECO:0000255" key="4">
    <source>
        <dbReference type="PROSITE-ProRule" id="PRU01210"/>
    </source>
</evidence>
<evidence type="ECO:0000269" key="5">
    <source>
    </source>
</evidence>
<evidence type="ECO:0000305" key="6"/>
<evidence type="ECO:0000312" key="7">
    <source>
        <dbReference type="EMBL" id="CAH03777.1"/>
    </source>
</evidence>
<proteinExistence type="evidence at transcript level"/>
<protein>
    <recommendedName>
        <fullName>Toxin-like peptide AaF1CA7</fullName>
    </recommendedName>
</protein>
<accession>Q4LCT1</accession>
<dbReference type="EMBL" id="AJ781831">
    <property type="protein sequence ID" value="CAH03777.1"/>
    <property type="molecule type" value="mRNA"/>
</dbReference>
<dbReference type="SMR" id="Q4LCT1"/>
<dbReference type="GO" id="GO:0005576">
    <property type="term" value="C:extracellular region"/>
    <property type="evidence" value="ECO:0000250"/>
    <property type="project" value="UniProtKB"/>
</dbReference>
<dbReference type="GO" id="GO:0008200">
    <property type="term" value="F:ion channel inhibitor activity"/>
    <property type="evidence" value="ECO:0000250"/>
    <property type="project" value="UniProtKB"/>
</dbReference>
<dbReference type="GO" id="GO:0019871">
    <property type="term" value="F:sodium channel inhibitor activity"/>
    <property type="evidence" value="ECO:0007669"/>
    <property type="project" value="InterPro"/>
</dbReference>
<dbReference type="GO" id="GO:0090729">
    <property type="term" value="F:toxin activity"/>
    <property type="evidence" value="ECO:0007669"/>
    <property type="project" value="UniProtKB-KW"/>
</dbReference>
<dbReference type="CDD" id="cd23106">
    <property type="entry name" value="neurotoxins_LC_scorpion"/>
    <property type="match status" value="1"/>
</dbReference>
<dbReference type="FunFam" id="3.30.30.10:FF:000008">
    <property type="entry name" value="Toxin-like peptide AaF1CA7"/>
    <property type="match status" value="1"/>
</dbReference>
<dbReference type="Gene3D" id="3.30.30.10">
    <property type="entry name" value="Knottin, scorpion toxin-like"/>
    <property type="match status" value="1"/>
</dbReference>
<dbReference type="InterPro" id="IPR044062">
    <property type="entry name" value="LCN-type_CS_alpha_beta_dom"/>
</dbReference>
<dbReference type="InterPro" id="IPR036574">
    <property type="entry name" value="Scorpion_toxin-like_sf"/>
</dbReference>
<dbReference type="InterPro" id="IPR002061">
    <property type="entry name" value="Scorpion_toxinL/defensin"/>
</dbReference>
<dbReference type="Pfam" id="PF00537">
    <property type="entry name" value="Toxin_3"/>
    <property type="match status" value="1"/>
</dbReference>
<dbReference type="SUPFAM" id="SSF57095">
    <property type="entry name" value="Scorpion toxin-like"/>
    <property type="match status" value="1"/>
</dbReference>
<dbReference type="PROSITE" id="PS51863">
    <property type="entry name" value="LCN_CSAB"/>
    <property type="match status" value="1"/>
</dbReference>
<comment type="function">
    <text evidence="1">Probable neurotoxin that inhibits ion channels.</text>
</comment>
<comment type="subcellular location">
    <subcellularLocation>
        <location evidence="2">Secreted</location>
    </subcellularLocation>
</comment>
<comment type="tissue specificity">
    <text evidence="5">Expressed by the venom gland.</text>
</comment>
<comment type="domain">
    <text evidence="6">Has the structural arrangement of an alpha-helix connected to antiparallel beta-sheets by disulfide bonds (CS-alpha/beta).</text>
</comment>
<comment type="similarity">
    <text evidence="6">Belongs to the long (3 C-C) scorpion toxin superfamily.</text>
</comment>
<reference evidence="6 7" key="1">
    <citation type="journal article" date="2005" name="Biochem. Biophys. Res. Commun.">
        <title>New 'birtoxin analogs' from Androctonus australis venom.</title>
        <authorList>
            <person name="Martin-Eauclaire M.-F."/>
            <person name="Ceard B."/>
            <person name="Bosmans F."/>
            <person name="Rosso J.-P."/>
            <person name="Tytgat J."/>
            <person name="Bougis P.E."/>
        </authorList>
    </citation>
    <scope>NUCLEOTIDE SEQUENCE [MRNA]</scope>
    <scope>TISSUE SPECIFICITY</scope>
    <source>
        <tissue evidence="5">Venom gland</tissue>
    </source>
</reference>
<feature type="signal peptide" evidence="3 7">
    <location>
        <begin position="1"/>
        <end position="22"/>
    </location>
</feature>
<feature type="chain" id="PRO_0000228818" description="Toxin-like peptide AaF1CA7" evidence="7">
    <location>
        <begin position="23"/>
        <end position="75"/>
    </location>
</feature>
<feature type="domain" description="LCN-type CS-alpha/beta" evidence="4">
    <location>
        <begin position="25"/>
        <end position="75"/>
    </location>
</feature>
<feature type="disulfide bond" evidence="4">
    <location>
        <begin position="40"/>
        <end position="63"/>
    </location>
</feature>
<feature type="disulfide bond" evidence="4">
    <location>
        <begin position="49"/>
        <end position="68"/>
    </location>
</feature>
<feature type="disulfide bond" evidence="4">
    <location>
        <begin position="53"/>
        <end position="70"/>
    </location>
</feature>
<organism>
    <name type="scientific">Androctonus australis</name>
    <name type="common">Sahara scorpion</name>
    <dbReference type="NCBI Taxonomy" id="6858"/>
    <lineage>
        <taxon>Eukaryota</taxon>
        <taxon>Metazoa</taxon>
        <taxon>Ecdysozoa</taxon>
        <taxon>Arthropoda</taxon>
        <taxon>Chelicerata</taxon>
        <taxon>Arachnida</taxon>
        <taxon>Scorpiones</taxon>
        <taxon>Buthida</taxon>
        <taxon>Buthoidea</taxon>
        <taxon>Buthidae</taxon>
        <taxon>Androctonus</taxon>
    </lineage>
</organism>
<keyword id="KW-1015">Disulfide bond</keyword>
<keyword id="KW-0872">Ion channel impairing toxin</keyword>
<keyword id="KW-0528">Neurotoxin</keyword>
<keyword id="KW-0964">Secreted</keyword>
<keyword id="KW-0732">Signal</keyword>
<keyword id="KW-0800">Toxin</keyword>
<name>TXA7_ANDAU</name>